<sequence>MSTQRSLGTKVMLLVSGISLFVYLILAVLTSYWQRQSALTLIDSGAVRASELLLDAIADPMSKGNDTGTTEKFDAIARRYADIRAYMTDFRGNITYSTSKDVLRRDLADVVQAPALLDKFNAALKTDSREEQLATIDGMAFYATIRSIPNAPECHHCHGRSQPILGTLVMLQDVTPAMSELRLHQYETVGLSVGGLLLLVGVLSLFMRRAVISRVQRIAAVSGQIEQGDYSVSFEHDGNDELTRLNANLASMVTTIRDQMQYNRSVLEGIIVPLAVVDARNRIEFINQPMCTIVSTACHEYSGKDFSAFMQQGGVEEDITATVLKGGNNQQGNISYRRDDGTVFPLHYEVSPLRDDRGAVNGAIAVIIDLTQEEEARRRIEEQRINLLRVADEVTGVAETLVRAAEALVTRMGELERDATEAASETTQVATAMEEMNVTVTEVARNASSTAEMADLANGEAQSGGTEMANTVRETRQVAQRTEDLAESLHELARRADNIGRVIEVINEIADQTNLLALNAAIEAARAGDAGRGFAVVADEVRKLAEKTMVATREVEQAIAAIQQGSNDAVEVMTETRQQVEVTAGKAEDTGKVLSGIVGRAESIADMVRNIATASEQQSSTSDEINRNVTRINDLTEGIQRRVREAGDAIRQVEGMAQRLEALVDGFRK</sequence>
<proteinExistence type="inferred from homology"/>
<feature type="chain" id="PRO_0000110564" description="Chemoreceptor protein A">
    <location>
        <begin position="1"/>
        <end position="669"/>
    </location>
</feature>
<feature type="transmembrane region" description="Helical" evidence="1">
    <location>
        <begin position="11"/>
        <end position="31"/>
    </location>
</feature>
<feature type="domain" description="HAMP" evidence="2">
    <location>
        <begin position="209"/>
        <end position="261"/>
    </location>
</feature>
<feature type="domain" description="PAC" evidence="3">
    <location>
        <begin position="330"/>
        <end position="382"/>
    </location>
</feature>
<feature type="domain" description="Methyl-accepting transducer" evidence="4">
    <location>
        <begin position="397"/>
        <end position="633"/>
    </location>
</feature>
<feature type="sequence conflict" description="In Ref. 1; AAA23379." evidence="5" ref="1">
    <original>N</original>
    <variation>K</variation>
    <location>
        <position position="248"/>
    </location>
</feature>
<feature type="sequence conflict" description="In Ref. 1; AAA23379." evidence="5" ref="1">
    <original>LANGE</original>
    <variation>CQWR</variation>
    <location>
        <begin position="456"/>
        <end position="460"/>
    </location>
</feature>
<feature type="sequence conflict" description="In Ref. 1; AAA23379." evidence="5" ref="1">
    <original>V</original>
    <variation>L</variation>
    <location>
        <position position="536"/>
    </location>
</feature>
<feature type="sequence conflict" description="In Ref. 1; AAA23379." evidence="5" ref="1">
    <original>GIQRRVREAGDA</original>
    <variation>ASRDGCGKQAMP</variation>
    <location>
        <begin position="638"/>
        <end position="649"/>
    </location>
</feature>
<name>DCRA_NITV2</name>
<evidence type="ECO:0000255" key="1"/>
<evidence type="ECO:0000255" key="2">
    <source>
        <dbReference type="PROSITE-ProRule" id="PRU00102"/>
    </source>
</evidence>
<evidence type="ECO:0000255" key="3">
    <source>
        <dbReference type="PROSITE-ProRule" id="PRU00141"/>
    </source>
</evidence>
<evidence type="ECO:0000255" key="4">
    <source>
        <dbReference type="PROSITE-ProRule" id="PRU00284"/>
    </source>
</evidence>
<evidence type="ECO:0000305" key="5"/>
<organism>
    <name type="scientific">Nitratidesulfovibrio vulgaris (strain ATCC 29579 / DSM 644 / CCUG 34227 / NCIMB 8303 / VKM B-1760 / Hildenborough)</name>
    <name type="common">Desulfovibrio vulgaris</name>
    <dbReference type="NCBI Taxonomy" id="882"/>
    <lineage>
        <taxon>Bacteria</taxon>
        <taxon>Pseudomonadati</taxon>
        <taxon>Thermodesulfobacteriota</taxon>
        <taxon>Desulfovibrionia</taxon>
        <taxon>Desulfovibrionales</taxon>
        <taxon>Desulfovibrionaceae</taxon>
        <taxon>Nitratidesulfovibrio</taxon>
    </lineage>
</organism>
<comment type="subcellular location">
    <subcellularLocation>
        <location evidence="5">Cell membrane</location>
        <topology evidence="5">Single-pass membrane protein</topology>
        <orientation evidence="5">Periplasmic side</orientation>
    </subcellularLocation>
</comment>
<comment type="similarity">
    <text evidence="5">Belongs to the methyl-accepting chemotaxis (MCP) protein family.</text>
</comment>
<gene>
    <name type="primary">dcrA</name>
    <name type="ordered locus">DVU_3182</name>
</gene>
<keyword id="KW-1003">Cell membrane</keyword>
<keyword id="KW-0145">Chemotaxis</keyword>
<keyword id="KW-0472">Membrane</keyword>
<keyword id="KW-0488">Methylation</keyword>
<keyword id="KW-1185">Reference proteome</keyword>
<keyword id="KW-0807">Transducer</keyword>
<keyword id="KW-0812">Transmembrane</keyword>
<keyword id="KW-1133">Transmembrane helix</keyword>
<protein>
    <recommendedName>
        <fullName>Chemoreceptor protein A</fullName>
    </recommendedName>
</protein>
<accession>P35841</accession>
<reference key="1">
    <citation type="journal article" date="1992" name="J. Bacteriol.">
        <title>Nucleotide sequence of dcrA, a Desulfovibrio vulgaris Hildenborough chemoreceptor gene, and its expression in Escherichia coli.</title>
        <authorList>
            <person name="Dolla A."/>
            <person name="Fu R."/>
            <person name="Brumlik M.J."/>
            <person name="Voordouw G."/>
        </authorList>
    </citation>
    <scope>NUCLEOTIDE SEQUENCE [GENOMIC DNA]</scope>
</reference>
<reference key="2">
    <citation type="journal article" date="2004" name="Nat. Biotechnol.">
        <title>The genome sequence of the anaerobic, sulfate-reducing bacterium Desulfovibrio vulgaris Hildenborough.</title>
        <authorList>
            <person name="Heidelberg J.F."/>
            <person name="Seshadri R."/>
            <person name="Haveman S.A."/>
            <person name="Hemme C.L."/>
            <person name="Paulsen I.T."/>
            <person name="Kolonay J.F."/>
            <person name="Eisen J.A."/>
            <person name="Ward N.L."/>
            <person name="Methe B.A."/>
            <person name="Brinkac L.M."/>
            <person name="Daugherty S.C."/>
            <person name="DeBoy R.T."/>
            <person name="Dodson R.J."/>
            <person name="Durkin A.S."/>
            <person name="Madupu R."/>
            <person name="Nelson W.C."/>
            <person name="Sullivan S.A."/>
            <person name="Fouts D.E."/>
            <person name="Haft D.H."/>
            <person name="Selengut J."/>
            <person name="Peterson J.D."/>
            <person name="Davidsen T.M."/>
            <person name="Zafar N."/>
            <person name="Zhou L."/>
            <person name="Radune D."/>
            <person name="Dimitrov G."/>
            <person name="Hance M."/>
            <person name="Tran K."/>
            <person name="Khouri H.M."/>
            <person name="Gill J."/>
            <person name="Utterback T.R."/>
            <person name="Feldblyum T.V."/>
            <person name="Wall J.D."/>
            <person name="Voordouw G."/>
            <person name="Fraser C.M."/>
        </authorList>
    </citation>
    <scope>NUCLEOTIDE SEQUENCE [LARGE SCALE GENOMIC DNA]</scope>
    <source>
        <strain>ATCC 29579 / DSM 644 / CCUG 34227 / NCIMB 8303 / VKM B-1760 / Hildenborough</strain>
    </source>
</reference>
<dbReference type="EMBL" id="M81168">
    <property type="protein sequence ID" value="AAA23379.1"/>
    <property type="molecule type" value="Genomic_DNA"/>
</dbReference>
<dbReference type="EMBL" id="AE017285">
    <property type="protein sequence ID" value="AAS97652.1"/>
    <property type="molecule type" value="Genomic_DNA"/>
</dbReference>
<dbReference type="PIR" id="A42275">
    <property type="entry name" value="A42275"/>
</dbReference>
<dbReference type="RefSeq" id="WP_010940440.1">
    <property type="nucleotide sequence ID" value="NC_002937.3"/>
</dbReference>
<dbReference type="RefSeq" id="YP_012392.1">
    <property type="nucleotide sequence ID" value="NC_002937.3"/>
</dbReference>
<dbReference type="SMR" id="P35841"/>
<dbReference type="STRING" id="882.DVU_3182"/>
<dbReference type="PaxDb" id="882-DVU_3182"/>
<dbReference type="EnsemblBacteria" id="AAS97652">
    <property type="protein sequence ID" value="AAS97652"/>
    <property type="gene ID" value="DVU_3182"/>
</dbReference>
<dbReference type="KEGG" id="dvu:DVU_3182"/>
<dbReference type="PATRIC" id="fig|882.5.peg.2887"/>
<dbReference type="eggNOG" id="COG0840">
    <property type="taxonomic scope" value="Bacteria"/>
</dbReference>
<dbReference type="HOGENOM" id="CLU_000445_107_27_7"/>
<dbReference type="OrthoDB" id="9816383at2"/>
<dbReference type="PhylomeDB" id="P35841"/>
<dbReference type="Proteomes" id="UP000002194">
    <property type="component" value="Chromosome"/>
</dbReference>
<dbReference type="GO" id="GO:0005886">
    <property type="term" value="C:plasma membrane"/>
    <property type="evidence" value="ECO:0007669"/>
    <property type="project" value="UniProtKB-SubCell"/>
</dbReference>
<dbReference type="GO" id="GO:0004888">
    <property type="term" value="F:transmembrane signaling receptor activity"/>
    <property type="evidence" value="ECO:0007669"/>
    <property type="project" value="InterPro"/>
</dbReference>
<dbReference type="GO" id="GO:0006935">
    <property type="term" value="P:chemotaxis"/>
    <property type="evidence" value="ECO:0007669"/>
    <property type="project" value="UniProtKB-KW"/>
</dbReference>
<dbReference type="GO" id="GO:0007165">
    <property type="term" value="P:signal transduction"/>
    <property type="evidence" value="ECO:0007669"/>
    <property type="project" value="UniProtKB-KW"/>
</dbReference>
<dbReference type="CDD" id="cd06225">
    <property type="entry name" value="HAMP"/>
    <property type="match status" value="1"/>
</dbReference>
<dbReference type="CDD" id="cd11386">
    <property type="entry name" value="MCP_signal"/>
    <property type="match status" value="1"/>
</dbReference>
<dbReference type="CDD" id="cd00130">
    <property type="entry name" value="PAS"/>
    <property type="match status" value="1"/>
</dbReference>
<dbReference type="FunFam" id="1.10.287.950:FF:000001">
    <property type="entry name" value="Methyl-accepting chemotaxis sensory transducer"/>
    <property type="match status" value="1"/>
</dbReference>
<dbReference type="Gene3D" id="3.30.450.290">
    <property type="match status" value="1"/>
</dbReference>
<dbReference type="Gene3D" id="6.10.340.10">
    <property type="match status" value="1"/>
</dbReference>
<dbReference type="Gene3D" id="1.10.287.950">
    <property type="entry name" value="Methyl-accepting chemotaxis protein"/>
    <property type="match status" value="1"/>
</dbReference>
<dbReference type="Gene3D" id="3.30.450.20">
    <property type="entry name" value="PAS domain"/>
    <property type="match status" value="1"/>
</dbReference>
<dbReference type="InterPro" id="IPR004090">
    <property type="entry name" value="Chemotax_Me-accpt_rcpt"/>
</dbReference>
<dbReference type="InterPro" id="IPR003660">
    <property type="entry name" value="HAMP_dom"/>
</dbReference>
<dbReference type="InterPro" id="IPR004089">
    <property type="entry name" value="MCPsignal_dom"/>
</dbReference>
<dbReference type="InterPro" id="IPR001610">
    <property type="entry name" value="PAC"/>
</dbReference>
<dbReference type="InterPro" id="IPR000014">
    <property type="entry name" value="PAS"/>
</dbReference>
<dbReference type="InterPro" id="IPR000700">
    <property type="entry name" value="PAS-assoc_C"/>
</dbReference>
<dbReference type="InterPro" id="IPR035965">
    <property type="entry name" value="PAS-like_dom_sf"/>
</dbReference>
<dbReference type="NCBIfam" id="TIGR00229">
    <property type="entry name" value="sensory_box"/>
    <property type="match status" value="1"/>
</dbReference>
<dbReference type="PANTHER" id="PTHR32089:SF112">
    <property type="entry name" value="LYSOZYME-LIKE PROTEIN-RELATED"/>
    <property type="match status" value="1"/>
</dbReference>
<dbReference type="PANTHER" id="PTHR32089">
    <property type="entry name" value="METHYL-ACCEPTING CHEMOTAXIS PROTEIN MCPB"/>
    <property type="match status" value="1"/>
</dbReference>
<dbReference type="Pfam" id="PF00672">
    <property type="entry name" value="HAMP"/>
    <property type="match status" value="1"/>
</dbReference>
<dbReference type="Pfam" id="PF00015">
    <property type="entry name" value="MCPsignal"/>
    <property type="match status" value="1"/>
</dbReference>
<dbReference type="Pfam" id="PF13426">
    <property type="entry name" value="PAS_9"/>
    <property type="match status" value="1"/>
</dbReference>
<dbReference type="PRINTS" id="PR00260">
    <property type="entry name" value="CHEMTRNSDUCR"/>
</dbReference>
<dbReference type="SMART" id="SM00304">
    <property type="entry name" value="HAMP"/>
    <property type="match status" value="2"/>
</dbReference>
<dbReference type="SMART" id="SM00283">
    <property type="entry name" value="MA"/>
    <property type="match status" value="1"/>
</dbReference>
<dbReference type="SMART" id="SM00086">
    <property type="entry name" value="PAC"/>
    <property type="match status" value="1"/>
</dbReference>
<dbReference type="SMART" id="SM00091">
    <property type="entry name" value="PAS"/>
    <property type="match status" value="1"/>
</dbReference>
<dbReference type="SUPFAM" id="SSF58104">
    <property type="entry name" value="Methyl-accepting chemotaxis protein (MCP) signaling domain"/>
    <property type="match status" value="1"/>
</dbReference>
<dbReference type="SUPFAM" id="SSF55785">
    <property type="entry name" value="PYP-like sensor domain (PAS domain)"/>
    <property type="match status" value="1"/>
</dbReference>
<dbReference type="PROSITE" id="PS50111">
    <property type="entry name" value="CHEMOTAXIS_TRANSDUC_2"/>
    <property type="match status" value="1"/>
</dbReference>
<dbReference type="PROSITE" id="PS50885">
    <property type="entry name" value="HAMP"/>
    <property type="match status" value="1"/>
</dbReference>
<dbReference type="PROSITE" id="PS50113">
    <property type="entry name" value="PAC"/>
    <property type="match status" value="1"/>
</dbReference>